<geneLocation type="chloroplast"/>
<name>DNAK_GRATL</name>
<comment type="function">
    <text evidence="1">Acts as a chaperone.</text>
</comment>
<comment type="subcellular location">
    <subcellularLocation>
        <location>Plastid</location>
        <location>Chloroplast</location>
    </subcellularLocation>
</comment>
<comment type="similarity">
    <text evidence="1">Belongs to the heat shock protein 70 family.</text>
</comment>
<dbReference type="EMBL" id="AY673996">
    <property type="protein sequence ID" value="AAT79683.1"/>
    <property type="molecule type" value="Genomic_DNA"/>
</dbReference>
<dbReference type="RefSeq" id="YP_063608.1">
    <property type="nucleotide sequence ID" value="NC_006137.1"/>
</dbReference>
<dbReference type="SMR" id="Q6B8V2"/>
<dbReference type="GeneID" id="2944038"/>
<dbReference type="GO" id="GO:0009507">
    <property type="term" value="C:chloroplast"/>
    <property type="evidence" value="ECO:0007669"/>
    <property type="project" value="UniProtKB-SubCell"/>
</dbReference>
<dbReference type="GO" id="GO:0005524">
    <property type="term" value="F:ATP binding"/>
    <property type="evidence" value="ECO:0007669"/>
    <property type="project" value="UniProtKB-UniRule"/>
</dbReference>
<dbReference type="GO" id="GO:0140662">
    <property type="term" value="F:ATP-dependent protein folding chaperone"/>
    <property type="evidence" value="ECO:0007669"/>
    <property type="project" value="InterPro"/>
</dbReference>
<dbReference type="GO" id="GO:0051082">
    <property type="term" value="F:unfolded protein binding"/>
    <property type="evidence" value="ECO:0007669"/>
    <property type="project" value="InterPro"/>
</dbReference>
<dbReference type="CDD" id="cd10234">
    <property type="entry name" value="ASKHA_NBD_HSP70_DnaK-like"/>
    <property type="match status" value="1"/>
</dbReference>
<dbReference type="FunFam" id="2.60.34.10:FF:000014">
    <property type="entry name" value="Chaperone protein DnaK HSP70"/>
    <property type="match status" value="1"/>
</dbReference>
<dbReference type="FunFam" id="1.20.1270.10:FF:000001">
    <property type="entry name" value="Molecular chaperone DnaK"/>
    <property type="match status" value="1"/>
</dbReference>
<dbReference type="FunFam" id="3.30.420.40:FF:000004">
    <property type="entry name" value="Molecular chaperone DnaK"/>
    <property type="match status" value="1"/>
</dbReference>
<dbReference type="FunFam" id="3.90.640.10:FF:000003">
    <property type="entry name" value="Molecular chaperone DnaK"/>
    <property type="match status" value="1"/>
</dbReference>
<dbReference type="Gene3D" id="1.20.1270.10">
    <property type="match status" value="1"/>
</dbReference>
<dbReference type="Gene3D" id="3.30.420.40">
    <property type="match status" value="2"/>
</dbReference>
<dbReference type="Gene3D" id="3.90.640.10">
    <property type="entry name" value="Actin, Chain A, domain 4"/>
    <property type="match status" value="1"/>
</dbReference>
<dbReference type="Gene3D" id="2.60.34.10">
    <property type="entry name" value="Substrate Binding Domain Of DNAk, Chain A, domain 1"/>
    <property type="match status" value="1"/>
</dbReference>
<dbReference type="HAMAP" id="MF_00332">
    <property type="entry name" value="DnaK"/>
    <property type="match status" value="1"/>
</dbReference>
<dbReference type="InterPro" id="IPR043129">
    <property type="entry name" value="ATPase_NBD"/>
</dbReference>
<dbReference type="InterPro" id="IPR012725">
    <property type="entry name" value="Chaperone_DnaK"/>
</dbReference>
<dbReference type="InterPro" id="IPR018181">
    <property type="entry name" value="Heat_shock_70_CS"/>
</dbReference>
<dbReference type="InterPro" id="IPR029048">
    <property type="entry name" value="HSP70_C_sf"/>
</dbReference>
<dbReference type="InterPro" id="IPR029047">
    <property type="entry name" value="HSP70_peptide-bd_sf"/>
</dbReference>
<dbReference type="InterPro" id="IPR013126">
    <property type="entry name" value="Hsp_70_fam"/>
</dbReference>
<dbReference type="NCBIfam" id="NF001413">
    <property type="entry name" value="PRK00290.1"/>
    <property type="match status" value="1"/>
</dbReference>
<dbReference type="NCBIfam" id="TIGR02350">
    <property type="entry name" value="prok_dnaK"/>
    <property type="match status" value="1"/>
</dbReference>
<dbReference type="PANTHER" id="PTHR19375">
    <property type="entry name" value="HEAT SHOCK PROTEIN 70KDA"/>
    <property type="match status" value="1"/>
</dbReference>
<dbReference type="Pfam" id="PF00012">
    <property type="entry name" value="HSP70"/>
    <property type="match status" value="1"/>
</dbReference>
<dbReference type="PRINTS" id="PR00301">
    <property type="entry name" value="HEATSHOCK70"/>
</dbReference>
<dbReference type="SUPFAM" id="SSF53067">
    <property type="entry name" value="Actin-like ATPase domain"/>
    <property type="match status" value="2"/>
</dbReference>
<dbReference type="SUPFAM" id="SSF100934">
    <property type="entry name" value="Heat shock protein 70kD (HSP70), C-terminal subdomain"/>
    <property type="match status" value="1"/>
</dbReference>
<dbReference type="SUPFAM" id="SSF100920">
    <property type="entry name" value="Heat shock protein 70kD (HSP70), peptide-binding domain"/>
    <property type="match status" value="1"/>
</dbReference>
<dbReference type="PROSITE" id="PS00297">
    <property type="entry name" value="HSP70_1"/>
    <property type="match status" value="1"/>
</dbReference>
<dbReference type="PROSITE" id="PS00329">
    <property type="entry name" value="HSP70_2"/>
    <property type="match status" value="1"/>
</dbReference>
<dbReference type="PROSITE" id="PS01036">
    <property type="entry name" value="HSP70_3"/>
    <property type="match status" value="1"/>
</dbReference>
<feature type="chain" id="PRO_0000078607" description="Chaperone protein dnaK">
    <location>
        <begin position="1"/>
        <end position="621"/>
    </location>
</feature>
<feature type="region of interest" description="Disordered" evidence="2">
    <location>
        <begin position="597"/>
        <end position="621"/>
    </location>
</feature>
<evidence type="ECO:0000255" key="1">
    <source>
        <dbReference type="HAMAP-Rule" id="MF_00332"/>
    </source>
</evidence>
<evidence type="ECO:0000256" key="2">
    <source>
        <dbReference type="SAM" id="MobiDB-lite"/>
    </source>
</evidence>
<gene>
    <name evidence="1" type="primary">dnaK</name>
    <name type="ordered locus">Grc000102</name>
</gene>
<sequence length="621" mass="68081">MAKVVGIDLGTTNSVIAVMEGGKPTVIPNKEGLRTTPSVVAYTKKQDKLVGQIAKRQAVMNPENTFYSVKRFIGRKKDELGDELKQSSYNVKTDINSNVKLECPALSKDFAPEEISAQVLRKLVEDASTYLGQQVTQAVITVPAYFNDSQRQATKDAGQIAGLDVLRIINEPTAASLSYGLDKKNNETILVFDLGGGTFDVSILEVGDGVFEVLSTSGDTHLGGDDFDRKIVEWLIHEFSHDEGINLGKDRQALQRLTEAAEKAKMELSSLAQTDINLPFITSTDTGPKHLEKNITRAKFEYLCQDLINRCEIPVNNALKDAQLSSGNIDEIVLVGGSTRIPAIQQLVKKMIGKDPNQSVNPDEVVAIGAAVQAGVLAGEVKDILLLDVTPLSLGVETLGGVMTKIIDRNTTVPTKKSEIFSTAVDNQPNVEIHVLQGEREFTKDNKSLGTFRLDGIMPAPRGVPQIEVIFDIDANGILSVKAKDKGTGKEQSITITGASTLPKEEVEKLVKEAEENSELDKHKREQIDLKNQADALCYQSQNQINELKDKISEDEKQNVQKLIDSLKLSIQEDDYEKIKDIQNQLQQVMMNIGKQVYSSTQQDNSKTEDGSVIDTNSKEA</sequence>
<proteinExistence type="inferred from homology"/>
<protein>
    <recommendedName>
        <fullName>Chaperone protein dnaK</fullName>
    </recommendedName>
    <alternativeName>
        <fullName evidence="1">HSP70</fullName>
    </alternativeName>
    <alternativeName>
        <fullName evidence="1">Heat shock 70 kDa protein</fullName>
    </alternativeName>
    <alternativeName>
        <fullName evidence="1">Heat shock protein 70</fullName>
    </alternativeName>
</protein>
<organism>
    <name type="scientific">Gracilaria tenuistipitata var. liui</name>
    <name type="common">Red alga</name>
    <dbReference type="NCBI Taxonomy" id="285951"/>
    <lineage>
        <taxon>Eukaryota</taxon>
        <taxon>Rhodophyta</taxon>
        <taxon>Florideophyceae</taxon>
        <taxon>Rhodymeniophycidae</taxon>
        <taxon>Gracilariales</taxon>
        <taxon>Gracilariaceae</taxon>
        <taxon>Gracilaria</taxon>
        <taxon>Gracilaria tenuistipitata</taxon>
    </lineage>
</organism>
<accession>Q6B8V2</accession>
<keyword id="KW-0067">ATP-binding</keyword>
<keyword id="KW-0143">Chaperone</keyword>
<keyword id="KW-0150">Chloroplast</keyword>
<keyword id="KW-0547">Nucleotide-binding</keyword>
<keyword id="KW-0934">Plastid</keyword>
<reference key="1">
    <citation type="journal article" date="2004" name="J. Mol. Evol.">
        <title>Comparative analysis of the complete plastid genome sequence of the red alga Gracilaria tenuistipitata var. liui provides insights into the evolution of rhodoplasts and their relationship to other plastids.</title>
        <authorList>
            <person name="Hagopian J.C."/>
            <person name="Reis M."/>
            <person name="Kitajima J.P."/>
            <person name="Bhattacharya D."/>
            <person name="de Oliveira M.C."/>
        </authorList>
    </citation>
    <scope>NUCLEOTIDE SEQUENCE [LARGE SCALE GENOMIC DNA]</scope>
</reference>